<comment type="catalytic activity">
    <reaction evidence="1">
        <text>tRNA(Leu) + L-leucine + ATP = L-leucyl-tRNA(Leu) + AMP + diphosphate</text>
        <dbReference type="Rhea" id="RHEA:11688"/>
        <dbReference type="Rhea" id="RHEA-COMP:9613"/>
        <dbReference type="Rhea" id="RHEA-COMP:9622"/>
        <dbReference type="ChEBI" id="CHEBI:30616"/>
        <dbReference type="ChEBI" id="CHEBI:33019"/>
        <dbReference type="ChEBI" id="CHEBI:57427"/>
        <dbReference type="ChEBI" id="CHEBI:78442"/>
        <dbReference type="ChEBI" id="CHEBI:78494"/>
        <dbReference type="ChEBI" id="CHEBI:456215"/>
        <dbReference type="EC" id="6.1.1.4"/>
    </reaction>
</comment>
<comment type="subcellular location">
    <subcellularLocation>
        <location evidence="1">Cytoplasm</location>
    </subcellularLocation>
</comment>
<comment type="similarity">
    <text evidence="1">Belongs to the class-I aminoacyl-tRNA synthetase family.</text>
</comment>
<keyword id="KW-0030">Aminoacyl-tRNA synthetase</keyword>
<keyword id="KW-0067">ATP-binding</keyword>
<keyword id="KW-0963">Cytoplasm</keyword>
<keyword id="KW-0436">Ligase</keyword>
<keyword id="KW-0547">Nucleotide-binding</keyword>
<keyword id="KW-0648">Protein biosynthesis</keyword>
<reference key="1">
    <citation type="journal article" date="2009" name="J. Bacteriol.">
        <title>Complete genome sequence of Rhodobacter sphaeroides KD131.</title>
        <authorList>
            <person name="Lim S.-K."/>
            <person name="Kim S.J."/>
            <person name="Cha S.H."/>
            <person name="Oh Y.-K."/>
            <person name="Rhee H.-J."/>
            <person name="Kim M.-S."/>
            <person name="Lee J.K."/>
        </authorList>
    </citation>
    <scope>NUCLEOTIDE SEQUENCE [LARGE SCALE GENOMIC DNA]</scope>
    <source>
        <strain>KD131 / KCTC 12085</strain>
    </source>
</reference>
<organism>
    <name type="scientific">Cereibacter sphaeroides (strain KD131 / KCTC 12085)</name>
    <name type="common">Rhodobacter sphaeroides</name>
    <dbReference type="NCBI Taxonomy" id="557760"/>
    <lineage>
        <taxon>Bacteria</taxon>
        <taxon>Pseudomonadati</taxon>
        <taxon>Pseudomonadota</taxon>
        <taxon>Alphaproteobacteria</taxon>
        <taxon>Rhodobacterales</taxon>
        <taxon>Paracoccaceae</taxon>
        <taxon>Cereibacter</taxon>
    </lineage>
</organism>
<protein>
    <recommendedName>
        <fullName evidence="1">Leucine--tRNA ligase</fullName>
        <ecNumber evidence="1">6.1.1.4</ecNumber>
    </recommendedName>
    <alternativeName>
        <fullName evidence="1">Leucyl-tRNA synthetase</fullName>
        <shortName evidence="1">LeuRS</shortName>
    </alternativeName>
</protein>
<proteinExistence type="inferred from homology"/>
<dbReference type="EC" id="6.1.1.4" evidence="1"/>
<dbReference type="EMBL" id="CP001150">
    <property type="protein sequence ID" value="ACM02069.1"/>
    <property type="molecule type" value="Genomic_DNA"/>
</dbReference>
<dbReference type="RefSeq" id="WP_015921266.1">
    <property type="nucleotide sequence ID" value="NC_011963.1"/>
</dbReference>
<dbReference type="SMR" id="B9KMH8"/>
<dbReference type="GeneID" id="67447594"/>
<dbReference type="KEGG" id="rsk:RSKD131_2209"/>
<dbReference type="HOGENOM" id="CLU_004427_0_0_5"/>
<dbReference type="GO" id="GO:0005829">
    <property type="term" value="C:cytosol"/>
    <property type="evidence" value="ECO:0007669"/>
    <property type="project" value="TreeGrafter"/>
</dbReference>
<dbReference type="GO" id="GO:0002161">
    <property type="term" value="F:aminoacyl-tRNA deacylase activity"/>
    <property type="evidence" value="ECO:0007669"/>
    <property type="project" value="InterPro"/>
</dbReference>
<dbReference type="GO" id="GO:0005524">
    <property type="term" value="F:ATP binding"/>
    <property type="evidence" value="ECO:0007669"/>
    <property type="project" value="UniProtKB-UniRule"/>
</dbReference>
<dbReference type="GO" id="GO:0004823">
    <property type="term" value="F:leucine-tRNA ligase activity"/>
    <property type="evidence" value="ECO:0007669"/>
    <property type="project" value="UniProtKB-UniRule"/>
</dbReference>
<dbReference type="GO" id="GO:0006429">
    <property type="term" value="P:leucyl-tRNA aminoacylation"/>
    <property type="evidence" value="ECO:0007669"/>
    <property type="project" value="UniProtKB-UniRule"/>
</dbReference>
<dbReference type="CDD" id="cd07958">
    <property type="entry name" value="Anticodon_Ia_Leu_BEm"/>
    <property type="match status" value="1"/>
</dbReference>
<dbReference type="CDD" id="cd00812">
    <property type="entry name" value="LeuRS_core"/>
    <property type="match status" value="1"/>
</dbReference>
<dbReference type="FunFam" id="1.10.730.10:FF:000002">
    <property type="entry name" value="Leucine--tRNA ligase"/>
    <property type="match status" value="1"/>
</dbReference>
<dbReference type="FunFam" id="3.40.50.620:FF:000003">
    <property type="entry name" value="Leucine--tRNA ligase"/>
    <property type="match status" value="1"/>
</dbReference>
<dbReference type="Gene3D" id="2.20.28.290">
    <property type="match status" value="1"/>
</dbReference>
<dbReference type="Gene3D" id="3.10.20.590">
    <property type="match status" value="1"/>
</dbReference>
<dbReference type="Gene3D" id="3.40.50.620">
    <property type="entry name" value="HUPs"/>
    <property type="match status" value="2"/>
</dbReference>
<dbReference type="Gene3D" id="1.10.730.10">
    <property type="entry name" value="Isoleucyl-tRNA Synthetase, Domain 1"/>
    <property type="match status" value="1"/>
</dbReference>
<dbReference type="Gene3D" id="3.90.740.10">
    <property type="entry name" value="Valyl/Leucyl/Isoleucyl-tRNA synthetase, editing domain"/>
    <property type="match status" value="1"/>
</dbReference>
<dbReference type="HAMAP" id="MF_00049_B">
    <property type="entry name" value="Leu_tRNA_synth_B"/>
    <property type="match status" value="1"/>
</dbReference>
<dbReference type="InterPro" id="IPR001412">
    <property type="entry name" value="aa-tRNA-synth_I_CS"/>
</dbReference>
<dbReference type="InterPro" id="IPR002300">
    <property type="entry name" value="aa-tRNA-synth_Ia"/>
</dbReference>
<dbReference type="InterPro" id="IPR002302">
    <property type="entry name" value="Leu-tRNA-ligase"/>
</dbReference>
<dbReference type="InterPro" id="IPR025709">
    <property type="entry name" value="Leu_tRNA-synth_edit"/>
</dbReference>
<dbReference type="InterPro" id="IPR013155">
    <property type="entry name" value="M/V/L/I-tRNA-synth_anticd-bd"/>
</dbReference>
<dbReference type="InterPro" id="IPR015413">
    <property type="entry name" value="Methionyl/Leucyl_tRNA_Synth"/>
</dbReference>
<dbReference type="InterPro" id="IPR014729">
    <property type="entry name" value="Rossmann-like_a/b/a_fold"/>
</dbReference>
<dbReference type="InterPro" id="IPR009080">
    <property type="entry name" value="tRNAsynth_Ia_anticodon-bd"/>
</dbReference>
<dbReference type="InterPro" id="IPR009008">
    <property type="entry name" value="Val/Leu/Ile-tRNA-synth_edit"/>
</dbReference>
<dbReference type="NCBIfam" id="TIGR00396">
    <property type="entry name" value="leuS_bact"/>
    <property type="match status" value="1"/>
</dbReference>
<dbReference type="PANTHER" id="PTHR43740:SF2">
    <property type="entry name" value="LEUCINE--TRNA LIGASE, MITOCHONDRIAL"/>
    <property type="match status" value="1"/>
</dbReference>
<dbReference type="PANTHER" id="PTHR43740">
    <property type="entry name" value="LEUCYL-TRNA SYNTHETASE"/>
    <property type="match status" value="1"/>
</dbReference>
<dbReference type="Pfam" id="PF08264">
    <property type="entry name" value="Anticodon_1"/>
    <property type="match status" value="1"/>
</dbReference>
<dbReference type="Pfam" id="PF00133">
    <property type="entry name" value="tRNA-synt_1"/>
    <property type="match status" value="2"/>
</dbReference>
<dbReference type="Pfam" id="PF13603">
    <property type="entry name" value="tRNA-synt_1_2"/>
    <property type="match status" value="1"/>
</dbReference>
<dbReference type="Pfam" id="PF09334">
    <property type="entry name" value="tRNA-synt_1g"/>
    <property type="match status" value="1"/>
</dbReference>
<dbReference type="PRINTS" id="PR00985">
    <property type="entry name" value="TRNASYNTHLEU"/>
</dbReference>
<dbReference type="SUPFAM" id="SSF47323">
    <property type="entry name" value="Anticodon-binding domain of a subclass of class I aminoacyl-tRNA synthetases"/>
    <property type="match status" value="1"/>
</dbReference>
<dbReference type="SUPFAM" id="SSF52374">
    <property type="entry name" value="Nucleotidylyl transferase"/>
    <property type="match status" value="1"/>
</dbReference>
<dbReference type="SUPFAM" id="SSF50677">
    <property type="entry name" value="ValRS/IleRS/LeuRS editing domain"/>
    <property type="match status" value="1"/>
</dbReference>
<dbReference type="PROSITE" id="PS00178">
    <property type="entry name" value="AA_TRNA_LIGASE_I"/>
    <property type="match status" value="1"/>
</dbReference>
<evidence type="ECO:0000255" key="1">
    <source>
        <dbReference type="HAMAP-Rule" id="MF_00049"/>
    </source>
</evidence>
<gene>
    <name evidence="1" type="primary">leuS</name>
    <name type="ordered locus">RSKD131_2209</name>
</gene>
<name>SYL_CERSK</name>
<feature type="chain" id="PRO_1000199221" description="Leucine--tRNA ligase">
    <location>
        <begin position="1"/>
        <end position="847"/>
    </location>
</feature>
<feature type="short sequence motif" description="'HIGH' region">
    <location>
        <begin position="41"/>
        <end position="51"/>
    </location>
</feature>
<feature type="short sequence motif" description="'KMSKS' region">
    <location>
        <begin position="619"/>
        <end position="623"/>
    </location>
</feature>
<feature type="binding site" evidence="1">
    <location>
        <position position="622"/>
    </location>
    <ligand>
        <name>ATP</name>
        <dbReference type="ChEBI" id="CHEBI:30616"/>
    </ligand>
</feature>
<sequence>MSRYDPAATESRWQAAWDAAGVFTARHDPARPKYYVLEMFPYPSGRIHMGHVRNYTMGDVVARQKAAAGFSVLHPMGWDAFGMPAENAAMERGGHPKDWTYGNIADMRAQMKPLGLSIDWSREFATCDPEYYGQQQAMFIDMMEAGLVYRKNAVVNWDPVDMTVLANEQVIDGKGWRSGAPVVRRELTQWFFRISDYAGELLEALDTLKDWPEKVRLMQANWIGQSRGLQFAFSTAGAPEGFDRLEVYTTRPDTLMGASFAAISPDHPLARHLERHDAEVAEFVAECRRVGTSEEALEKAEKKGFDTGLRVRHPFDTAWELPVYIANFILMDYGTGAIFGCPAHDQRDFEFATKYGLPIRPVFLPEGTEETALAEAFVPMKSERVHYIRGFAGAEVQSGEEGVAAAIDFCESQGVGRGVTNYRLRDWGISRQRYWGCPIPVIHCETCGVVPEAKENLPVRLPDDVSFDVPGNPLDRHPTWRDCTCPKCGAKARRETDTMDTFVDSSWYYARFTAPRAATPTDAEEADYWMNVDQYIGGIEHAILHLLYSRFFARAMQKTGHLPAKAIEPFNALFTQGMVTHEIYLTRDAAGRPVYHLPEDVTDGKLADGTPVEIIPSAKMSKSKKNVVDPMNIIRQFGADTARWFVMSDSPPERDVEWTASGAEAASKHLHRVWRLADEISRADGEANAEDGALDKATARAIAEVTQGVEGFAFNKAIAKLYEFTNTLSRSGAGAEAKKRAMRTMAQLMSPMVPHLAEEVWAMLGGEGLVAQAAWPKADPALLIDDTVTLPIQVNGKRRGEITVPKEMAASEVEKLVLADEAVQRALGGAAPKKLIVVPGRIVNVVI</sequence>
<accession>B9KMH8</accession>